<sequence>LKCHKLVPPVWKTCPEGKNLCYKMFMVSTSTVPVKRGCIDVCPKDSALVKYVCCSTDKCN</sequence>
<reference key="1">
    <citation type="journal article" date="1976" name="Biochim. Biophys. Acta">
        <title>The amino acid sequence of three non-curarimimetictoxins from Naja nivea venom.</title>
        <authorList>
            <person name="Botes D.P."/>
            <person name="Viljoen C.C."/>
        </authorList>
    </citation>
    <scope>PROTEIN SEQUENCE</scope>
    <scope>TOXIC DOSE</scope>
    <scope>SUBCELLULAR LOCATION</scope>
    <source>
        <tissue>Venom</tissue>
    </source>
</reference>
<evidence type="ECO:0000250" key="1">
    <source>
        <dbReference type="UniProtKB" id="P60301"/>
    </source>
</evidence>
<evidence type="ECO:0000250" key="2">
    <source>
        <dbReference type="UniProtKB" id="P60304"/>
    </source>
</evidence>
<evidence type="ECO:0000269" key="3">
    <source>
    </source>
</evidence>
<evidence type="ECO:0000305" key="4"/>
<name>3SA1_NAJNI</name>
<organism>
    <name type="scientific">Naja nivea</name>
    <name type="common">Cape cobra</name>
    <name type="synonym">Coluber niveus</name>
    <dbReference type="NCBI Taxonomy" id="8655"/>
    <lineage>
        <taxon>Eukaryota</taxon>
        <taxon>Metazoa</taxon>
        <taxon>Chordata</taxon>
        <taxon>Craniata</taxon>
        <taxon>Vertebrata</taxon>
        <taxon>Euteleostomi</taxon>
        <taxon>Lepidosauria</taxon>
        <taxon>Squamata</taxon>
        <taxon>Bifurcata</taxon>
        <taxon>Unidentata</taxon>
        <taxon>Episquamata</taxon>
        <taxon>Toxicofera</taxon>
        <taxon>Serpentes</taxon>
        <taxon>Colubroidea</taxon>
        <taxon>Elapidae</taxon>
        <taxon>Elapinae</taxon>
        <taxon>Naja</taxon>
    </lineage>
</organism>
<keyword id="KW-0123">Cardiotoxin</keyword>
<keyword id="KW-0204">Cytolysis</keyword>
<keyword id="KW-0903">Direct protein sequencing</keyword>
<keyword id="KW-1015">Disulfide bond</keyword>
<keyword id="KW-0472">Membrane</keyword>
<keyword id="KW-0964">Secreted</keyword>
<keyword id="KW-1052">Target cell membrane</keyword>
<keyword id="KW-1053">Target membrane</keyword>
<keyword id="KW-0800">Toxin</keyword>
<accession>P01456</accession>
<feature type="chain" id="PRO_0000093513" description="Cytotoxin 1" evidence="3">
    <location>
        <begin position="1"/>
        <end position="60"/>
    </location>
</feature>
<feature type="disulfide bond" evidence="1">
    <location>
        <begin position="3"/>
        <end position="21"/>
    </location>
</feature>
<feature type="disulfide bond" evidence="1">
    <location>
        <begin position="14"/>
        <end position="38"/>
    </location>
</feature>
<feature type="disulfide bond" evidence="1">
    <location>
        <begin position="42"/>
        <end position="53"/>
    </location>
</feature>
<feature type="disulfide bond" evidence="1">
    <location>
        <begin position="54"/>
        <end position="59"/>
    </location>
</feature>
<comment type="function">
    <text evidence="1 2">Shows cytolytic activity on many different cells by forming pore in lipid membranes. In vivo, increases heart rate or kills the animal by cardiac arrest. In addition, it binds to heparin with high affinity, interacts with Kv channel-interacting protein 1 (KCNIP1) in a calcium-independent manner, and binds to integrin alpha-V/beta-3 (ITGAV/ITGB3) with moderate affinity.</text>
</comment>
<comment type="subunit">
    <text evidence="1">Monomer in solution; Homodimer and oligomer in the presence of negatively charged lipids forming a pore with a size ranging between 20 and 30 Angstroms.</text>
</comment>
<comment type="subcellular location">
    <subcellularLocation>
        <location evidence="3">Secreted</location>
    </subcellularLocation>
    <subcellularLocation>
        <location evidence="1">Target cell membrane</location>
    </subcellularLocation>
</comment>
<comment type="tissue specificity">
    <text evidence="4">Expressed by the venom gland.</text>
</comment>
<comment type="toxic dose">
    <text evidence="3">LD(50) is 2.9 mg/kg by subcutaneous injection into mice.</text>
</comment>
<comment type="miscellaneous">
    <text evidence="3">Shows very weak hemolytic activity.</text>
</comment>
<comment type="miscellaneous">
    <text evidence="4">Is classified as a S-type cytotoxin, since a serine residue stands at position 28 (Ser-29 in standard classification).</text>
</comment>
<comment type="similarity">
    <text evidence="4">Belongs to the three-finger toxin family. Short-chain subfamily. Type IA cytotoxin sub-subfamily.</text>
</comment>
<dbReference type="PIR" id="B01722">
    <property type="entry name" value="H3NJ1C"/>
</dbReference>
<dbReference type="SMR" id="P01456"/>
<dbReference type="GO" id="GO:0005576">
    <property type="term" value="C:extracellular region"/>
    <property type="evidence" value="ECO:0007669"/>
    <property type="project" value="UniProtKB-SubCell"/>
</dbReference>
<dbReference type="GO" id="GO:0016020">
    <property type="term" value="C:membrane"/>
    <property type="evidence" value="ECO:0007669"/>
    <property type="project" value="UniProtKB-KW"/>
</dbReference>
<dbReference type="GO" id="GO:0044218">
    <property type="term" value="C:other organism cell membrane"/>
    <property type="evidence" value="ECO:0007669"/>
    <property type="project" value="UniProtKB-KW"/>
</dbReference>
<dbReference type="GO" id="GO:0090729">
    <property type="term" value="F:toxin activity"/>
    <property type="evidence" value="ECO:0007669"/>
    <property type="project" value="UniProtKB-KW"/>
</dbReference>
<dbReference type="GO" id="GO:0031640">
    <property type="term" value="P:killing of cells of another organism"/>
    <property type="evidence" value="ECO:0007669"/>
    <property type="project" value="UniProtKB-KW"/>
</dbReference>
<dbReference type="CDD" id="cd00206">
    <property type="entry name" value="TFP_snake_toxin"/>
    <property type="match status" value="1"/>
</dbReference>
<dbReference type="FunFam" id="2.10.60.10:FF:000024">
    <property type="entry name" value="Cytotoxin 1"/>
    <property type="match status" value="1"/>
</dbReference>
<dbReference type="Gene3D" id="2.10.60.10">
    <property type="entry name" value="CD59"/>
    <property type="match status" value="1"/>
</dbReference>
<dbReference type="InterPro" id="IPR003572">
    <property type="entry name" value="Cytotoxin_Cobra"/>
</dbReference>
<dbReference type="InterPro" id="IPR003571">
    <property type="entry name" value="Snake_3FTx"/>
</dbReference>
<dbReference type="InterPro" id="IPR045860">
    <property type="entry name" value="Snake_toxin-like_sf"/>
</dbReference>
<dbReference type="InterPro" id="IPR018354">
    <property type="entry name" value="Snake_toxin_con_site"/>
</dbReference>
<dbReference type="InterPro" id="IPR054131">
    <property type="entry name" value="Toxin_cobra-type"/>
</dbReference>
<dbReference type="Pfam" id="PF21947">
    <property type="entry name" value="Toxin_cobra-type"/>
    <property type="match status" value="1"/>
</dbReference>
<dbReference type="PRINTS" id="PR00282">
    <property type="entry name" value="CYTOTOXIN"/>
</dbReference>
<dbReference type="SUPFAM" id="SSF57302">
    <property type="entry name" value="Snake toxin-like"/>
    <property type="match status" value="1"/>
</dbReference>
<dbReference type="PROSITE" id="PS00272">
    <property type="entry name" value="SNAKE_TOXIN"/>
    <property type="match status" value="1"/>
</dbReference>
<proteinExistence type="evidence at protein level"/>
<protein>
    <recommendedName>
        <fullName>Cytotoxin 1</fullName>
    </recommendedName>
    <alternativeName>
        <fullName>Toxin V(II)1</fullName>
    </alternativeName>
</protein>